<evidence type="ECO:0000250" key="1">
    <source>
        <dbReference type="UniProtKB" id="P0DL81"/>
    </source>
</evidence>
<evidence type="ECO:0000255" key="2"/>
<evidence type="ECO:0000269" key="3">
    <source>
    </source>
</evidence>
<evidence type="ECO:0000303" key="4">
    <source>
    </source>
</evidence>
<evidence type="ECO:0000305" key="5"/>
<evidence type="ECO:0000305" key="6">
    <source>
    </source>
</evidence>
<name>CT1A_CORTR</name>
<reference key="1">
    <citation type="journal article" date="2016" name="Toxicon">
        <title>Isolation of two insecticidal toxins from venom of the Australian theraphosid spider Coremiocnemis tropix.</title>
        <authorList>
            <person name="Ikonomopoulou M.P."/>
            <person name="Smith J.J."/>
            <person name="Herzig V."/>
            <person name="Pineda S.S."/>
            <person name="Dziemborowicz S."/>
            <person name="Er S.Y."/>
            <person name="Durek T."/>
            <person name="Gilchrist J."/>
            <person name="Alewood P.F."/>
            <person name="Nicholson G.M."/>
            <person name="Bosmans F."/>
            <person name="King G.F."/>
        </authorList>
    </citation>
    <scope>NUCLEOTIDE SEQUENCE [MRNA]</scope>
    <scope>PROTEIN SEQUENCE OF 49-87</scope>
    <scope>FUNCTION</scope>
    <scope>BIOASSAY</scope>
    <scope>SUBCELLULAR LOCATION</scope>
    <scope>TOXIC DOSE</scope>
    <scope>MASS SPECTROMETRY</scope>
    <scope>SYNTHESIS OF 49-87</scope>
    <source>
        <tissue>Venom</tissue>
        <tissue>Venom gland</tissue>
    </source>
</reference>
<protein>
    <recommendedName>
        <fullName evidence="4">U1-theraphotoxin-Ct1a</fullName>
        <shortName evidence="4">U1-TRTX-Ct1a</shortName>
    </recommendedName>
</protein>
<proteinExistence type="evidence at protein level"/>
<feature type="signal peptide" evidence="2">
    <location>
        <begin position="1"/>
        <end position="23"/>
    </location>
</feature>
<feature type="propeptide" id="PRO_0000442235" evidence="3">
    <location>
        <begin position="24"/>
        <end position="48"/>
    </location>
</feature>
<feature type="chain" id="PRO_0000442236" description="U1-theraphotoxin-Ct1a" evidence="3">
    <location>
        <begin position="49"/>
        <end position="87"/>
    </location>
</feature>
<keyword id="KW-0903">Direct protein sequencing</keyword>
<keyword id="KW-1015">Disulfide bond</keyword>
<keyword id="KW-0528">Neurotoxin</keyword>
<keyword id="KW-0964">Secreted</keyword>
<keyword id="KW-0732">Signal</keyword>
<keyword id="KW-0800">Toxin</keyword>
<organism>
    <name type="scientific">Coremiocnemis tropix</name>
    <name type="common">Australian tarantula spider</name>
    <dbReference type="NCBI Taxonomy" id="1904443"/>
    <lineage>
        <taxon>Eukaryota</taxon>
        <taxon>Metazoa</taxon>
        <taxon>Ecdysozoa</taxon>
        <taxon>Arthropoda</taxon>
        <taxon>Chelicerata</taxon>
        <taxon>Arachnida</taxon>
        <taxon>Araneae</taxon>
        <taxon>Mygalomorphae</taxon>
        <taxon>Theraphosidae</taxon>
        <taxon>Coremiocnemis</taxon>
    </lineage>
</organism>
<sequence length="87" mass="9546">MKTFTLIAILTCAVLVIFHAAAAEELEVQDVIQPEDTLTGLATLDEDRLFECSFSCDIKKNGKPCKGSGEKKCSGGWRCKMNFCVKV</sequence>
<comment type="function">
    <text evidence="1 3">This toxin causes paralysis and death to sheep blowflies (PubMed:27793656). It may inhibit voltage-gated calcium channels (By similarity).</text>
</comment>
<comment type="subcellular location">
    <subcellularLocation>
        <location evidence="3">Secreted</location>
    </subcellularLocation>
</comment>
<comment type="tissue specificity">
    <text evidence="6">Expressed by the venom gland.</text>
</comment>
<comment type="PTM">
    <text evidence="6">Contains 3 disulfide bonds. Two different connectivities are observed in similar proteins (C1-C3, C2-C5, C4-C6 or C1-C4, C2-C5, C3-C6).</text>
</comment>
<comment type="mass spectrometry" mass="4325.068" method="MALDI" evidence="3">
    <text>Monoisotopic mass.</text>
</comment>
<comment type="toxic dose">
    <text evidence="3">PD(50) is 1335 +- 132 pmol/g in adult sheep blowflies (L.cuprina) (at 24 hours post-injection).</text>
</comment>
<comment type="toxic dose">
    <text evidence="3">LD(50) is 1688 +- 64 pmol/g in adult sheep blowflies (L.cuprina) (at 24 hours post-injection).</text>
</comment>
<comment type="miscellaneous">
    <text evidence="3">No effect of the synthetic peptide are observed on voltage-gated sodium channels from the American cockroach Periplanata americana or the German cockroach Blattella germanica.</text>
</comment>
<comment type="similarity">
    <text evidence="5">Belongs to the neurotoxin 12 (Hwtx-2) family. 03 (juruin) subfamily.</text>
</comment>
<dbReference type="SMR" id="P0DL77"/>
<dbReference type="GO" id="GO:0005576">
    <property type="term" value="C:extracellular region"/>
    <property type="evidence" value="ECO:0007669"/>
    <property type="project" value="UniProtKB-SubCell"/>
</dbReference>
<dbReference type="GO" id="GO:0090729">
    <property type="term" value="F:toxin activity"/>
    <property type="evidence" value="ECO:0007669"/>
    <property type="project" value="UniProtKB-KW"/>
</dbReference>
<dbReference type="InterPro" id="IPR012625">
    <property type="entry name" value="Hwtx-2-like"/>
</dbReference>
<dbReference type="Pfam" id="PF08089">
    <property type="entry name" value="Toxin_20"/>
    <property type="match status" value="1"/>
</dbReference>
<dbReference type="SUPFAM" id="SSF57059">
    <property type="entry name" value="omega toxin-like"/>
    <property type="match status" value="1"/>
</dbReference>
<dbReference type="PROSITE" id="PS60022">
    <property type="entry name" value="HWTX_2"/>
    <property type="match status" value="1"/>
</dbReference>
<accession>P0DL77</accession>